<comment type="function">
    <text evidence="1">Part of the twin-arginine translocation (Tat) system that transports large folded proteins containing a characteristic twin-arginine motif in their signal peptide across membranes. TatA could form the protein-conducting channel of the Tat system.</text>
</comment>
<comment type="subunit">
    <text evidence="1">The Tat system comprises two distinct complexes: a TatABC complex, containing multiple copies of TatA, TatB and TatC subunits, and a separate TatA complex, containing only TatA subunits. Substrates initially bind to the TatABC complex, which probably triggers association of the separate TatA complex to form the active translocon.</text>
</comment>
<comment type="subcellular location">
    <subcellularLocation>
        <location evidence="1">Cell inner membrane</location>
        <topology evidence="1">Single-pass membrane protein</topology>
    </subcellularLocation>
</comment>
<comment type="similarity">
    <text evidence="1">Belongs to the TatA/E family.</text>
</comment>
<reference key="1">
    <citation type="submission" date="2008-06" db="EMBL/GenBank/DDBJ databases">
        <title>Complete sequence of Stenotrophomonas maltophilia R551-3.</title>
        <authorList>
            <consortium name="US DOE Joint Genome Institute"/>
            <person name="Lucas S."/>
            <person name="Copeland A."/>
            <person name="Lapidus A."/>
            <person name="Glavina del Rio T."/>
            <person name="Dalin E."/>
            <person name="Tice H."/>
            <person name="Pitluck S."/>
            <person name="Chain P."/>
            <person name="Malfatti S."/>
            <person name="Shin M."/>
            <person name="Vergez L."/>
            <person name="Lang D."/>
            <person name="Schmutz J."/>
            <person name="Larimer F."/>
            <person name="Land M."/>
            <person name="Hauser L."/>
            <person name="Kyrpides N."/>
            <person name="Mikhailova N."/>
            <person name="Taghavi S."/>
            <person name="Monchy S."/>
            <person name="Newman L."/>
            <person name="Vangronsveld J."/>
            <person name="van der Lelie D."/>
            <person name="Richardson P."/>
        </authorList>
    </citation>
    <scope>NUCLEOTIDE SEQUENCE [LARGE SCALE GENOMIC DNA]</scope>
    <source>
        <strain>R551-3</strain>
    </source>
</reference>
<organism>
    <name type="scientific">Stenotrophomonas maltophilia (strain R551-3)</name>
    <dbReference type="NCBI Taxonomy" id="391008"/>
    <lineage>
        <taxon>Bacteria</taxon>
        <taxon>Pseudomonadati</taxon>
        <taxon>Pseudomonadota</taxon>
        <taxon>Gammaproteobacteria</taxon>
        <taxon>Lysobacterales</taxon>
        <taxon>Lysobacteraceae</taxon>
        <taxon>Stenotrophomonas</taxon>
        <taxon>Stenotrophomonas maltophilia group</taxon>
    </lineage>
</organism>
<gene>
    <name evidence="1" type="primary">tatA</name>
    <name type="ordered locus">Smal_3989</name>
</gene>
<proteinExistence type="inferred from homology"/>
<feature type="chain" id="PRO_1000197909" description="Sec-independent protein translocase protein TatA">
    <location>
        <begin position="1"/>
        <end position="75"/>
    </location>
</feature>
<feature type="transmembrane region" description="Helical" evidence="1">
    <location>
        <begin position="1"/>
        <end position="21"/>
    </location>
</feature>
<feature type="region of interest" description="Disordered" evidence="2">
    <location>
        <begin position="40"/>
        <end position="75"/>
    </location>
</feature>
<dbReference type="EMBL" id="CP001111">
    <property type="protein sequence ID" value="ACF53688.1"/>
    <property type="molecule type" value="Genomic_DNA"/>
</dbReference>
<dbReference type="RefSeq" id="WP_012512521.1">
    <property type="nucleotide sequence ID" value="NC_011071.1"/>
</dbReference>
<dbReference type="SMR" id="B4SNR8"/>
<dbReference type="STRING" id="391008.Smal_3989"/>
<dbReference type="KEGG" id="smt:Smal_3989"/>
<dbReference type="eggNOG" id="COG1826">
    <property type="taxonomic scope" value="Bacteria"/>
</dbReference>
<dbReference type="HOGENOM" id="CLU_086034_5_3_6"/>
<dbReference type="OrthoDB" id="7066617at2"/>
<dbReference type="Proteomes" id="UP000001867">
    <property type="component" value="Chromosome"/>
</dbReference>
<dbReference type="GO" id="GO:0033281">
    <property type="term" value="C:TAT protein transport complex"/>
    <property type="evidence" value="ECO:0007669"/>
    <property type="project" value="UniProtKB-UniRule"/>
</dbReference>
<dbReference type="GO" id="GO:0008320">
    <property type="term" value="F:protein transmembrane transporter activity"/>
    <property type="evidence" value="ECO:0007669"/>
    <property type="project" value="UniProtKB-UniRule"/>
</dbReference>
<dbReference type="GO" id="GO:0043953">
    <property type="term" value="P:protein transport by the Tat complex"/>
    <property type="evidence" value="ECO:0007669"/>
    <property type="project" value="UniProtKB-UniRule"/>
</dbReference>
<dbReference type="Gene3D" id="1.20.5.3310">
    <property type="match status" value="1"/>
</dbReference>
<dbReference type="HAMAP" id="MF_00236">
    <property type="entry name" value="TatA_E"/>
    <property type="match status" value="1"/>
</dbReference>
<dbReference type="InterPro" id="IPR003369">
    <property type="entry name" value="TatA/B/E"/>
</dbReference>
<dbReference type="InterPro" id="IPR006312">
    <property type="entry name" value="TatA/E"/>
</dbReference>
<dbReference type="NCBIfam" id="NF002813">
    <property type="entry name" value="PRK02958.1"/>
    <property type="match status" value="1"/>
</dbReference>
<dbReference type="NCBIfam" id="NF003393">
    <property type="entry name" value="PRK04561.1"/>
    <property type="match status" value="1"/>
</dbReference>
<dbReference type="NCBIfam" id="TIGR01411">
    <property type="entry name" value="tatAE"/>
    <property type="match status" value="1"/>
</dbReference>
<dbReference type="PANTHER" id="PTHR42982">
    <property type="entry name" value="SEC-INDEPENDENT PROTEIN TRANSLOCASE PROTEIN TATA"/>
    <property type="match status" value="1"/>
</dbReference>
<dbReference type="PANTHER" id="PTHR42982:SF1">
    <property type="entry name" value="SEC-INDEPENDENT PROTEIN TRANSLOCASE PROTEIN TATA"/>
    <property type="match status" value="1"/>
</dbReference>
<dbReference type="Pfam" id="PF02416">
    <property type="entry name" value="TatA_B_E"/>
    <property type="match status" value="1"/>
</dbReference>
<accession>B4SNR8</accession>
<evidence type="ECO:0000255" key="1">
    <source>
        <dbReference type="HAMAP-Rule" id="MF_00236"/>
    </source>
</evidence>
<evidence type="ECO:0000256" key="2">
    <source>
        <dbReference type="SAM" id="MobiDB-lite"/>
    </source>
</evidence>
<keyword id="KW-0997">Cell inner membrane</keyword>
<keyword id="KW-1003">Cell membrane</keyword>
<keyword id="KW-0472">Membrane</keyword>
<keyword id="KW-0653">Protein transport</keyword>
<keyword id="KW-0811">Translocation</keyword>
<keyword id="KW-0812">Transmembrane</keyword>
<keyword id="KW-1133">Transmembrane helix</keyword>
<keyword id="KW-0813">Transport</keyword>
<sequence length="75" mass="8386">MGSFSIWHWLVVLAIVLLVFGTKRLTSGAKDLGSAVKEFKKGMRDEDKPNAQLGDESRSQDASRTAQDEHDRTPR</sequence>
<protein>
    <recommendedName>
        <fullName evidence="1">Sec-independent protein translocase protein TatA</fullName>
    </recommendedName>
</protein>
<name>TATA_STRM5</name>